<proteinExistence type="inferred from homology"/>
<organism>
    <name type="scientific">Brachyspira hyodysenteriae (strain ATCC 49526 / WA1)</name>
    <dbReference type="NCBI Taxonomy" id="565034"/>
    <lineage>
        <taxon>Bacteria</taxon>
        <taxon>Pseudomonadati</taxon>
        <taxon>Spirochaetota</taxon>
        <taxon>Spirochaetia</taxon>
        <taxon>Brachyspirales</taxon>
        <taxon>Brachyspiraceae</taxon>
        <taxon>Brachyspira</taxon>
    </lineage>
</organism>
<accession>C0QW93</accession>
<feature type="chain" id="PRO_1000122994" description="Elongation factor P">
    <location>
        <begin position="1"/>
        <end position="187"/>
    </location>
</feature>
<name>EFP_BRAHW</name>
<protein>
    <recommendedName>
        <fullName evidence="1">Elongation factor P</fullName>
        <shortName evidence="1">EF-P</shortName>
    </recommendedName>
</protein>
<reference key="1">
    <citation type="journal article" date="2009" name="PLoS ONE">
        <title>Genome sequence of the pathogenic intestinal spirochete Brachyspira hyodysenteriae reveals adaptations to its lifestyle in the porcine large intestine.</title>
        <authorList>
            <person name="Bellgard M.I."/>
            <person name="Wanchanthuek P."/>
            <person name="La T."/>
            <person name="Ryan K."/>
            <person name="Moolhuijzen P."/>
            <person name="Albertyn Z."/>
            <person name="Shaban B."/>
            <person name="Motro Y."/>
            <person name="Dunn D.S."/>
            <person name="Schibeci D."/>
            <person name="Hunter A."/>
            <person name="Barrero R."/>
            <person name="Phillips N.D."/>
            <person name="Hampson D.J."/>
        </authorList>
    </citation>
    <scope>NUCLEOTIDE SEQUENCE [LARGE SCALE GENOMIC DNA]</scope>
    <source>
        <strain>ATCC 49526 / WA1</strain>
    </source>
</reference>
<keyword id="KW-0963">Cytoplasm</keyword>
<keyword id="KW-0251">Elongation factor</keyword>
<keyword id="KW-0648">Protein biosynthesis</keyword>
<evidence type="ECO:0000255" key="1">
    <source>
        <dbReference type="HAMAP-Rule" id="MF_00141"/>
    </source>
</evidence>
<dbReference type="EMBL" id="CP001357">
    <property type="protein sequence ID" value="ACN84679.1"/>
    <property type="molecule type" value="Genomic_DNA"/>
</dbReference>
<dbReference type="RefSeq" id="WP_012671711.1">
    <property type="nucleotide sequence ID" value="NC_012225.1"/>
</dbReference>
<dbReference type="SMR" id="C0QW93"/>
<dbReference type="STRING" id="565034.BHWA1_02223"/>
<dbReference type="GeneID" id="63963377"/>
<dbReference type="KEGG" id="bhy:BHWA1_02223"/>
<dbReference type="eggNOG" id="COG0231">
    <property type="taxonomic scope" value="Bacteria"/>
</dbReference>
<dbReference type="HOGENOM" id="CLU_074944_0_1_12"/>
<dbReference type="UniPathway" id="UPA00345"/>
<dbReference type="Proteomes" id="UP000001803">
    <property type="component" value="Chromosome"/>
</dbReference>
<dbReference type="GO" id="GO:0005737">
    <property type="term" value="C:cytoplasm"/>
    <property type="evidence" value="ECO:0007669"/>
    <property type="project" value="UniProtKB-SubCell"/>
</dbReference>
<dbReference type="GO" id="GO:0003746">
    <property type="term" value="F:translation elongation factor activity"/>
    <property type="evidence" value="ECO:0007669"/>
    <property type="project" value="UniProtKB-UniRule"/>
</dbReference>
<dbReference type="GO" id="GO:0043043">
    <property type="term" value="P:peptide biosynthetic process"/>
    <property type="evidence" value="ECO:0007669"/>
    <property type="project" value="InterPro"/>
</dbReference>
<dbReference type="CDD" id="cd04470">
    <property type="entry name" value="S1_EF-P_repeat_1"/>
    <property type="match status" value="1"/>
</dbReference>
<dbReference type="CDD" id="cd05794">
    <property type="entry name" value="S1_EF-P_repeat_2"/>
    <property type="match status" value="1"/>
</dbReference>
<dbReference type="FunFam" id="2.30.30.30:FF:000003">
    <property type="entry name" value="Elongation factor P"/>
    <property type="match status" value="1"/>
</dbReference>
<dbReference type="FunFam" id="2.40.50.140:FF:000004">
    <property type="entry name" value="Elongation factor P"/>
    <property type="match status" value="1"/>
</dbReference>
<dbReference type="Gene3D" id="2.30.30.30">
    <property type="match status" value="1"/>
</dbReference>
<dbReference type="Gene3D" id="2.40.50.140">
    <property type="entry name" value="Nucleic acid-binding proteins"/>
    <property type="match status" value="2"/>
</dbReference>
<dbReference type="HAMAP" id="MF_00141">
    <property type="entry name" value="EF_P"/>
    <property type="match status" value="1"/>
</dbReference>
<dbReference type="InterPro" id="IPR015365">
    <property type="entry name" value="Elong-fact-P_C"/>
</dbReference>
<dbReference type="InterPro" id="IPR012340">
    <property type="entry name" value="NA-bd_OB-fold"/>
</dbReference>
<dbReference type="InterPro" id="IPR014722">
    <property type="entry name" value="Rib_uL2_dom2"/>
</dbReference>
<dbReference type="InterPro" id="IPR020599">
    <property type="entry name" value="Transl_elong_fac_P/YeiP"/>
</dbReference>
<dbReference type="InterPro" id="IPR013185">
    <property type="entry name" value="Transl_elong_KOW-like"/>
</dbReference>
<dbReference type="InterPro" id="IPR001059">
    <property type="entry name" value="Transl_elong_P/YeiP_cen"/>
</dbReference>
<dbReference type="InterPro" id="IPR013852">
    <property type="entry name" value="Transl_elong_P/YeiP_CS"/>
</dbReference>
<dbReference type="InterPro" id="IPR011768">
    <property type="entry name" value="Transl_elongation_fac_P"/>
</dbReference>
<dbReference type="InterPro" id="IPR008991">
    <property type="entry name" value="Translation_prot_SH3-like_sf"/>
</dbReference>
<dbReference type="NCBIfam" id="TIGR00038">
    <property type="entry name" value="efp"/>
    <property type="match status" value="1"/>
</dbReference>
<dbReference type="NCBIfam" id="NF001810">
    <property type="entry name" value="PRK00529.1"/>
    <property type="match status" value="1"/>
</dbReference>
<dbReference type="PANTHER" id="PTHR30053">
    <property type="entry name" value="ELONGATION FACTOR P"/>
    <property type="match status" value="1"/>
</dbReference>
<dbReference type="PANTHER" id="PTHR30053:SF12">
    <property type="entry name" value="ELONGATION FACTOR P (EF-P) FAMILY PROTEIN"/>
    <property type="match status" value="1"/>
</dbReference>
<dbReference type="Pfam" id="PF01132">
    <property type="entry name" value="EFP"/>
    <property type="match status" value="1"/>
</dbReference>
<dbReference type="Pfam" id="PF08207">
    <property type="entry name" value="EFP_N"/>
    <property type="match status" value="1"/>
</dbReference>
<dbReference type="Pfam" id="PF09285">
    <property type="entry name" value="Elong-fact-P_C"/>
    <property type="match status" value="1"/>
</dbReference>
<dbReference type="PIRSF" id="PIRSF005901">
    <property type="entry name" value="EF-P"/>
    <property type="match status" value="1"/>
</dbReference>
<dbReference type="SMART" id="SM01185">
    <property type="entry name" value="EFP"/>
    <property type="match status" value="1"/>
</dbReference>
<dbReference type="SMART" id="SM00841">
    <property type="entry name" value="Elong-fact-P_C"/>
    <property type="match status" value="1"/>
</dbReference>
<dbReference type="SUPFAM" id="SSF50249">
    <property type="entry name" value="Nucleic acid-binding proteins"/>
    <property type="match status" value="2"/>
</dbReference>
<dbReference type="SUPFAM" id="SSF50104">
    <property type="entry name" value="Translation proteins SH3-like domain"/>
    <property type="match status" value="1"/>
</dbReference>
<dbReference type="PROSITE" id="PS01275">
    <property type="entry name" value="EFP"/>
    <property type="match status" value="1"/>
</dbReference>
<gene>
    <name evidence="1" type="primary">efp</name>
    <name type="ordered locus">BHWA1_02223</name>
</gene>
<comment type="function">
    <text evidence="1">Involved in peptide bond synthesis. Stimulates efficient translation and peptide-bond synthesis on native or reconstituted 70S ribosomes in vitro. Probably functions indirectly by altering the affinity of the ribosome for aminoacyl-tRNA, thus increasing their reactivity as acceptors for peptidyl transferase.</text>
</comment>
<comment type="pathway">
    <text evidence="1">Protein biosynthesis; polypeptide chain elongation.</text>
</comment>
<comment type="subcellular location">
    <subcellularLocation>
        <location evidence="1">Cytoplasm</location>
    </subcellularLocation>
</comment>
<comment type="similarity">
    <text evidence="1">Belongs to the elongation factor P family.</text>
</comment>
<sequence>MLPVNDLRKGDAIILDGETYLVVDAHFHRAQQRKANVKTKLKNMLKGNMIEKTFSSTESVEEADLSYKKAQYLYEEGDSYVFMILDNYEQVHVSADILGDSKYYLLDSCEVDLQYINDEVTAVRFPIHVILEVTYTEPGFKGDTTGSTLKPAKLETGIEVNVPLFINIGDKIKVDTRDDSYVERVNK</sequence>